<gene>
    <name evidence="1" type="primary">ruvC</name>
    <name type="ordered locus">Erum0160</name>
    <name type="ordered locus">ERWE_CDS_00030</name>
</gene>
<organism>
    <name type="scientific">Ehrlichia ruminantium (strain Welgevonden)</name>
    <dbReference type="NCBI Taxonomy" id="254945"/>
    <lineage>
        <taxon>Bacteria</taxon>
        <taxon>Pseudomonadati</taxon>
        <taxon>Pseudomonadota</taxon>
        <taxon>Alphaproteobacteria</taxon>
        <taxon>Rickettsiales</taxon>
        <taxon>Anaplasmataceae</taxon>
        <taxon>Ehrlichia</taxon>
    </lineage>
</organism>
<dbReference type="EC" id="3.1.21.10" evidence="1"/>
<dbReference type="EMBL" id="CR767821">
    <property type="protein sequence ID" value="CAH57723.1"/>
    <property type="molecule type" value="Genomic_DNA"/>
</dbReference>
<dbReference type="EMBL" id="CR925678">
    <property type="protein sequence ID" value="CAI26497.1"/>
    <property type="molecule type" value="Genomic_DNA"/>
</dbReference>
<dbReference type="RefSeq" id="WP_011154699.1">
    <property type="nucleotide sequence ID" value="NC_005295.2"/>
</dbReference>
<dbReference type="SMR" id="Q5HCG1"/>
<dbReference type="GeneID" id="33057967"/>
<dbReference type="KEGG" id="eru:Erum0160"/>
<dbReference type="KEGG" id="erw:ERWE_CDS_00030"/>
<dbReference type="eggNOG" id="COG0817">
    <property type="taxonomic scope" value="Bacteria"/>
</dbReference>
<dbReference type="HOGENOM" id="CLU_091257_3_1_5"/>
<dbReference type="Proteomes" id="UP000001021">
    <property type="component" value="Chromosome"/>
</dbReference>
<dbReference type="GO" id="GO:0005737">
    <property type="term" value="C:cytoplasm"/>
    <property type="evidence" value="ECO:0007669"/>
    <property type="project" value="UniProtKB-SubCell"/>
</dbReference>
<dbReference type="GO" id="GO:0048476">
    <property type="term" value="C:Holliday junction resolvase complex"/>
    <property type="evidence" value="ECO:0007669"/>
    <property type="project" value="UniProtKB-UniRule"/>
</dbReference>
<dbReference type="GO" id="GO:0008821">
    <property type="term" value="F:crossover junction DNA endonuclease activity"/>
    <property type="evidence" value="ECO:0007669"/>
    <property type="project" value="UniProtKB-UniRule"/>
</dbReference>
<dbReference type="GO" id="GO:0003677">
    <property type="term" value="F:DNA binding"/>
    <property type="evidence" value="ECO:0007669"/>
    <property type="project" value="UniProtKB-KW"/>
</dbReference>
<dbReference type="GO" id="GO:0000287">
    <property type="term" value="F:magnesium ion binding"/>
    <property type="evidence" value="ECO:0007669"/>
    <property type="project" value="UniProtKB-UniRule"/>
</dbReference>
<dbReference type="GO" id="GO:0006310">
    <property type="term" value="P:DNA recombination"/>
    <property type="evidence" value="ECO:0007669"/>
    <property type="project" value="UniProtKB-UniRule"/>
</dbReference>
<dbReference type="GO" id="GO:0006281">
    <property type="term" value="P:DNA repair"/>
    <property type="evidence" value="ECO:0007669"/>
    <property type="project" value="UniProtKB-UniRule"/>
</dbReference>
<dbReference type="CDD" id="cd16962">
    <property type="entry name" value="RuvC"/>
    <property type="match status" value="1"/>
</dbReference>
<dbReference type="FunFam" id="3.30.420.10:FF:000002">
    <property type="entry name" value="Crossover junction endodeoxyribonuclease RuvC"/>
    <property type="match status" value="1"/>
</dbReference>
<dbReference type="Gene3D" id="3.30.420.10">
    <property type="entry name" value="Ribonuclease H-like superfamily/Ribonuclease H"/>
    <property type="match status" value="1"/>
</dbReference>
<dbReference type="HAMAP" id="MF_00034">
    <property type="entry name" value="RuvC"/>
    <property type="match status" value="1"/>
</dbReference>
<dbReference type="InterPro" id="IPR012337">
    <property type="entry name" value="RNaseH-like_sf"/>
</dbReference>
<dbReference type="InterPro" id="IPR036397">
    <property type="entry name" value="RNaseH_sf"/>
</dbReference>
<dbReference type="InterPro" id="IPR020563">
    <property type="entry name" value="X-over_junc_endoDNase_Mg_BS"/>
</dbReference>
<dbReference type="InterPro" id="IPR002176">
    <property type="entry name" value="X-over_junc_endoDNase_RuvC"/>
</dbReference>
<dbReference type="NCBIfam" id="TIGR00228">
    <property type="entry name" value="ruvC"/>
    <property type="match status" value="1"/>
</dbReference>
<dbReference type="PANTHER" id="PTHR30194">
    <property type="entry name" value="CROSSOVER JUNCTION ENDODEOXYRIBONUCLEASE RUVC"/>
    <property type="match status" value="1"/>
</dbReference>
<dbReference type="PANTHER" id="PTHR30194:SF3">
    <property type="entry name" value="CROSSOVER JUNCTION ENDODEOXYRIBONUCLEASE RUVC"/>
    <property type="match status" value="1"/>
</dbReference>
<dbReference type="Pfam" id="PF02075">
    <property type="entry name" value="RuvC"/>
    <property type="match status" value="1"/>
</dbReference>
<dbReference type="PRINTS" id="PR00696">
    <property type="entry name" value="RSOLVASERUVC"/>
</dbReference>
<dbReference type="SUPFAM" id="SSF53098">
    <property type="entry name" value="Ribonuclease H-like"/>
    <property type="match status" value="1"/>
</dbReference>
<dbReference type="PROSITE" id="PS01321">
    <property type="entry name" value="RUVC"/>
    <property type="match status" value="1"/>
</dbReference>
<reference key="1">
    <citation type="journal article" date="2005" name="Proc. Natl. Acad. Sci. U.S.A.">
        <title>The genome of the heartwater agent Ehrlichia ruminantium contains multiple tandem repeats of actively variable copy number.</title>
        <authorList>
            <person name="Collins N.E."/>
            <person name="Liebenberg J."/>
            <person name="de Villiers E.P."/>
            <person name="Brayton K.A."/>
            <person name="Louw E."/>
            <person name="Pretorius A."/>
            <person name="Faber F.E."/>
            <person name="van Heerden H."/>
            <person name="Josemans A."/>
            <person name="van Kleef M."/>
            <person name="Steyn H.C."/>
            <person name="van Strijp M.F."/>
            <person name="Zweygarth E."/>
            <person name="Jongejan F."/>
            <person name="Maillard J.C."/>
            <person name="Berthier D."/>
            <person name="Botha M."/>
            <person name="Joubert F."/>
            <person name="Corton C.H."/>
            <person name="Thomson N.R."/>
            <person name="Allsopp M.T."/>
            <person name="Allsopp B.A."/>
        </authorList>
    </citation>
    <scope>NUCLEOTIDE SEQUENCE [LARGE SCALE GENOMIC DNA]</scope>
    <source>
        <strain>Welgevonden</strain>
    </source>
</reference>
<reference key="2">
    <citation type="journal article" date="2006" name="J. Bacteriol.">
        <title>Comparative genomic analysis of three strains of Ehrlichia ruminantium reveals an active process of genome size plasticity.</title>
        <authorList>
            <person name="Frutos R."/>
            <person name="Viari A."/>
            <person name="Ferraz C."/>
            <person name="Morgat A."/>
            <person name="Eychenie S."/>
            <person name="Kandassamy Y."/>
            <person name="Chantal I."/>
            <person name="Bensaid A."/>
            <person name="Coissac E."/>
            <person name="Vachiery N."/>
            <person name="Demaille J."/>
            <person name="Martinez D."/>
        </authorList>
    </citation>
    <scope>NUCLEOTIDE SEQUENCE [LARGE SCALE GENOMIC DNA]</scope>
    <source>
        <strain>Welgevonden</strain>
    </source>
</reference>
<proteinExistence type="inferred from homology"/>
<comment type="function">
    <text evidence="1">The RuvA-RuvB-RuvC complex processes Holliday junction (HJ) DNA during genetic recombination and DNA repair. Endonuclease that resolves HJ intermediates. Cleaves cruciform DNA by making single-stranded nicks across the HJ at symmetrical positions within the homologous arms, yielding a 5'-phosphate and a 3'-hydroxyl group; requires a central core of homology in the junction. The consensus cleavage sequence is 5'-(A/T)TT(C/G)-3'. Cleavage occurs on the 3'-side of the TT dinucleotide at the point of strand exchange. HJ branch migration catalyzed by RuvA-RuvB allows RuvC to scan DNA until it finds its consensus sequence, where it cleaves and resolves the cruciform DNA.</text>
</comment>
<comment type="catalytic activity">
    <reaction evidence="1">
        <text>Endonucleolytic cleavage at a junction such as a reciprocal single-stranded crossover between two homologous DNA duplexes (Holliday junction).</text>
        <dbReference type="EC" id="3.1.21.10"/>
    </reaction>
</comment>
<comment type="cofactor">
    <cofactor evidence="1">
        <name>Mg(2+)</name>
        <dbReference type="ChEBI" id="CHEBI:18420"/>
    </cofactor>
    <text evidence="1">Binds 2 Mg(2+) ion per subunit.</text>
</comment>
<comment type="subunit">
    <text evidence="1">Homodimer which binds Holliday junction (HJ) DNA. The HJ becomes 2-fold symmetrical on binding to RuvC with unstacked arms; it has a different conformation from HJ DNA in complex with RuvA. In the full resolvosome a probable DNA-RuvA(4)-RuvB(12)-RuvC(2) complex forms which resolves the HJ.</text>
</comment>
<comment type="subcellular location">
    <subcellularLocation>
        <location evidence="1">Cytoplasm</location>
    </subcellularLocation>
</comment>
<comment type="similarity">
    <text evidence="1">Belongs to the RuvC family.</text>
</comment>
<evidence type="ECO:0000255" key="1">
    <source>
        <dbReference type="HAMAP-Rule" id="MF_00034"/>
    </source>
</evidence>
<name>RUVC_EHRRW</name>
<accession>Q5HCG1</accession>
<accession>Q5FCF5</accession>
<protein>
    <recommendedName>
        <fullName evidence="1">Crossover junction endodeoxyribonuclease RuvC</fullName>
        <ecNumber evidence="1">3.1.21.10</ecNumber>
    </recommendedName>
    <alternativeName>
        <fullName evidence="1">Holliday junction nuclease RuvC</fullName>
    </alternativeName>
    <alternativeName>
        <fullName evidence="1">Holliday junction resolvase RuvC</fullName>
    </alternativeName>
</protein>
<keyword id="KW-0963">Cytoplasm</keyword>
<keyword id="KW-0227">DNA damage</keyword>
<keyword id="KW-0233">DNA recombination</keyword>
<keyword id="KW-0234">DNA repair</keyword>
<keyword id="KW-0238">DNA-binding</keyword>
<keyword id="KW-0255">Endonuclease</keyword>
<keyword id="KW-0378">Hydrolase</keyword>
<keyword id="KW-0460">Magnesium</keyword>
<keyword id="KW-0479">Metal-binding</keyword>
<keyword id="KW-0540">Nuclease</keyword>
<feature type="chain" id="PRO_0000225143" description="Crossover junction endodeoxyribonuclease RuvC">
    <location>
        <begin position="1"/>
        <end position="160"/>
    </location>
</feature>
<feature type="active site" evidence="1">
    <location>
        <position position="7"/>
    </location>
</feature>
<feature type="active site" evidence="1">
    <location>
        <position position="70"/>
    </location>
</feature>
<feature type="active site" evidence="1">
    <location>
        <position position="142"/>
    </location>
</feature>
<feature type="binding site" evidence="1">
    <location>
        <position position="7"/>
    </location>
    <ligand>
        <name>Mg(2+)</name>
        <dbReference type="ChEBI" id="CHEBI:18420"/>
        <label>1</label>
    </ligand>
</feature>
<feature type="binding site" evidence="1">
    <location>
        <position position="70"/>
    </location>
    <ligand>
        <name>Mg(2+)</name>
        <dbReference type="ChEBI" id="CHEBI:18420"/>
        <label>2</label>
    </ligand>
</feature>
<feature type="binding site" evidence="1">
    <location>
        <position position="142"/>
    </location>
    <ligand>
        <name>Mg(2+)</name>
        <dbReference type="ChEBI" id="CHEBI:18420"/>
        <label>1</label>
    </ligand>
</feature>
<sequence>MNIIGIDPSLNSTGWAILSVHDNNYNEIRLVDNGSILTSNKKTIGERLNKIYSELLNILNSYKVDTASMEEIFINKNPKSSTLLCYARGVLLLTLNVACIPLFEYSANRVKKSITGNGHAKKEQVCFMIENILNIKCHGTYDISDAIAVAICHIYSIKAF</sequence>